<name>SYT_DEIGD</name>
<proteinExistence type="inferred from homology"/>
<reference key="1">
    <citation type="submission" date="2006-04" db="EMBL/GenBank/DDBJ databases">
        <title>Complete sequence of chromosome of Deinococcus geothermalis DSM 11300.</title>
        <authorList>
            <person name="Copeland A."/>
            <person name="Lucas S."/>
            <person name="Lapidus A."/>
            <person name="Barry K."/>
            <person name="Detter J.C."/>
            <person name="Glavina del Rio T."/>
            <person name="Hammon N."/>
            <person name="Israni S."/>
            <person name="Dalin E."/>
            <person name="Tice H."/>
            <person name="Pitluck S."/>
            <person name="Brettin T."/>
            <person name="Bruce D."/>
            <person name="Han C."/>
            <person name="Tapia R."/>
            <person name="Saunders E."/>
            <person name="Gilna P."/>
            <person name="Schmutz J."/>
            <person name="Larimer F."/>
            <person name="Land M."/>
            <person name="Hauser L."/>
            <person name="Kyrpides N."/>
            <person name="Kim E."/>
            <person name="Daly M.J."/>
            <person name="Fredrickson J.K."/>
            <person name="Makarova K.S."/>
            <person name="Gaidamakova E.K."/>
            <person name="Zhai M."/>
            <person name="Richardson P."/>
        </authorList>
    </citation>
    <scope>NUCLEOTIDE SEQUENCE [LARGE SCALE GENOMIC DNA]</scope>
    <source>
        <strain>DSM 11300 / CIP 105573 / AG-3a</strain>
    </source>
</reference>
<evidence type="ECO:0000255" key="1">
    <source>
        <dbReference type="HAMAP-Rule" id="MF_00184"/>
    </source>
</evidence>
<evidence type="ECO:0000255" key="2">
    <source>
        <dbReference type="PROSITE-ProRule" id="PRU01228"/>
    </source>
</evidence>
<accession>Q1IY82</accession>
<feature type="chain" id="PRO_1000020381" description="Threonine--tRNA ligase">
    <location>
        <begin position="1"/>
        <end position="649"/>
    </location>
</feature>
<feature type="domain" description="TGS" evidence="2">
    <location>
        <begin position="1"/>
        <end position="60"/>
    </location>
</feature>
<feature type="region of interest" description="Catalytic" evidence="1">
    <location>
        <begin position="248"/>
        <end position="544"/>
    </location>
</feature>
<feature type="binding site" evidence="1">
    <location>
        <position position="341"/>
    </location>
    <ligand>
        <name>Zn(2+)</name>
        <dbReference type="ChEBI" id="CHEBI:29105"/>
    </ligand>
</feature>
<feature type="binding site" evidence="1">
    <location>
        <position position="392"/>
    </location>
    <ligand>
        <name>Zn(2+)</name>
        <dbReference type="ChEBI" id="CHEBI:29105"/>
    </ligand>
</feature>
<feature type="binding site" evidence="1">
    <location>
        <position position="521"/>
    </location>
    <ligand>
        <name>Zn(2+)</name>
        <dbReference type="ChEBI" id="CHEBI:29105"/>
    </ligand>
</feature>
<keyword id="KW-0030">Aminoacyl-tRNA synthetase</keyword>
<keyword id="KW-0067">ATP-binding</keyword>
<keyword id="KW-0963">Cytoplasm</keyword>
<keyword id="KW-0436">Ligase</keyword>
<keyword id="KW-0479">Metal-binding</keyword>
<keyword id="KW-0547">Nucleotide-binding</keyword>
<keyword id="KW-0648">Protein biosynthesis</keyword>
<keyword id="KW-0694">RNA-binding</keyword>
<keyword id="KW-0820">tRNA-binding</keyword>
<keyword id="KW-0862">Zinc</keyword>
<comment type="function">
    <text evidence="1">Catalyzes the attachment of threonine to tRNA(Thr) in a two-step reaction: L-threonine is first activated by ATP to form Thr-AMP and then transferred to the acceptor end of tRNA(Thr). Also edits incorrectly charged L-seryl-tRNA(Thr).</text>
</comment>
<comment type="catalytic activity">
    <reaction evidence="1">
        <text>tRNA(Thr) + L-threonine + ATP = L-threonyl-tRNA(Thr) + AMP + diphosphate + H(+)</text>
        <dbReference type="Rhea" id="RHEA:24624"/>
        <dbReference type="Rhea" id="RHEA-COMP:9670"/>
        <dbReference type="Rhea" id="RHEA-COMP:9704"/>
        <dbReference type="ChEBI" id="CHEBI:15378"/>
        <dbReference type="ChEBI" id="CHEBI:30616"/>
        <dbReference type="ChEBI" id="CHEBI:33019"/>
        <dbReference type="ChEBI" id="CHEBI:57926"/>
        <dbReference type="ChEBI" id="CHEBI:78442"/>
        <dbReference type="ChEBI" id="CHEBI:78534"/>
        <dbReference type="ChEBI" id="CHEBI:456215"/>
        <dbReference type="EC" id="6.1.1.3"/>
    </reaction>
</comment>
<comment type="cofactor">
    <cofactor evidence="1">
        <name>Zn(2+)</name>
        <dbReference type="ChEBI" id="CHEBI:29105"/>
    </cofactor>
    <text evidence="1">Binds 1 zinc ion per subunit.</text>
</comment>
<comment type="subunit">
    <text evidence="1">Homodimer.</text>
</comment>
<comment type="subcellular location">
    <subcellularLocation>
        <location evidence="1">Cytoplasm</location>
    </subcellularLocation>
</comment>
<comment type="similarity">
    <text evidence="1">Belongs to the class-II aminoacyl-tRNA synthetase family.</text>
</comment>
<gene>
    <name evidence="1" type="primary">thrS</name>
    <name type="ordered locus">Dgeo_1507</name>
</gene>
<organism>
    <name type="scientific">Deinococcus geothermalis (strain DSM 11300 / CIP 105573 / AG-3a)</name>
    <dbReference type="NCBI Taxonomy" id="319795"/>
    <lineage>
        <taxon>Bacteria</taxon>
        <taxon>Thermotogati</taxon>
        <taxon>Deinococcota</taxon>
        <taxon>Deinococci</taxon>
        <taxon>Deinococcales</taxon>
        <taxon>Deinococcaceae</taxon>
        <taxon>Deinococcus</taxon>
    </lineage>
</organism>
<sequence length="649" mass="73929">MHVTLPDGKQLDLQAGATALDVARALGPRLAQDALAALVNGELMDLMTPLPEGAQVRLITKKNPGDAAPVFRHSLGHVLSQAVGEFYQRKGYPREAVKRGVGPAIENGFYQDFDLPEPLKEEDLPEIEAIMREIIGRGLDIVRQDVGKAAALKHFSYDPYKVELIQELPENEPVTFYAQGDYVDLCRGPHFPNTGKLPGAFKLMSTSGAYWRGNEKNPILQRVYGVAFATQKELDEYLERLEEARRRDHRKLGRELELFLIDPLVGKGLPMWLPNGTVLREELTRFLREQQFQRDYQGVVTPNIGNLDLFRTSGHYPYYSDSQFEPLSVDEEQYMLKPMNCPFHIRIYASKPRSYRDLPVRLAEFGTVYRYEMSGELNGLTRVRGFTQDDAHIFARPDQLKKEFLDVLDLTVLVLKTFGMNDVRFRVGVRDPASDKYVGDPAQWEVAERQIIEAVEEVGLPYTVEPGDAAFYGPKLDFVVKDVLGREWQLGTIQVDYNLPERFDLTYTGEDGQEHRPVMIHRAPFGSLERFVGILIEHYGGDFPFWLAPRQIMLIPIADRHNAYAQTLANEFKAAGLRAEVDDSNNRMNAKVRNAELHKIPVMLIVGDQEEARREVSVRERTPEGHKERKGVDFTALLAELQERYRTRA</sequence>
<protein>
    <recommendedName>
        <fullName evidence="1">Threonine--tRNA ligase</fullName>
        <ecNumber evidence="1">6.1.1.3</ecNumber>
    </recommendedName>
    <alternativeName>
        <fullName evidence="1">Threonyl-tRNA synthetase</fullName>
        <shortName evidence="1">ThrRS</shortName>
    </alternativeName>
</protein>
<dbReference type="EC" id="6.1.1.3" evidence="1"/>
<dbReference type="EMBL" id="CP000359">
    <property type="protein sequence ID" value="ABF45802.1"/>
    <property type="molecule type" value="Genomic_DNA"/>
</dbReference>
<dbReference type="RefSeq" id="WP_011530636.1">
    <property type="nucleotide sequence ID" value="NC_008025.1"/>
</dbReference>
<dbReference type="SMR" id="Q1IY82"/>
<dbReference type="STRING" id="319795.Dgeo_1507"/>
<dbReference type="KEGG" id="dge:Dgeo_1507"/>
<dbReference type="eggNOG" id="COG0441">
    <property type="taxonomic scope" value="Bacteria"/>
</dbReference>
<dbReference type="HOGENOM" id="CLU_008554_0_1_0"/>
<dbReference type="Proteomes" id="UP000002431">
    <property type="component" value="Chromosome"/>
</dbReference>
<dbReference type="GO" id="GO:0005737">
    <property type="term" value="C:cytoplasm"/>
    <property type="evidence" value="ECO:0007669"/>
    <property type="project" value="UniProtKB-SubCell"/>
</dbReference>
<dbReference type="GO" id="GO:0005524">
    <property type="term" value="F:ATP binding"/>
    <property type="evidence" value="ECO:0007669"/>
    <property type="project" value="UniProtKB-UniRule"/>
</dbReference>
<dbReference type="GO" id="GO:0046872">
    <property type="term" value="F:metal ion binding"/>
    <property type="evidence" value="ECO:0007669"/>
    <property type="project" value="UniProtKB-KW"/>
</dbReference>
<dbReference type="GO" id="GO:0004829">
    <property type="term" value="F:threonine-tRNA ligase activity"/>
    <property type="evidence" value="ECO:0007669"/>
    <property type="project" value="UniProtKB-UniRule"/>
</dbReference>
<dbReference type="GO" id="GO:0000049">
    <property type="term" value="F:tRNA binding"/>
    <property type="evidence" value="ECO:0007669"/>
    <property type="project" value="UniProtKB-KW"/>
</dbReference>
<dbReference type="GO" id="GO:0006435">
    <property type="term" value="P:threonyl-tRNA aminoacylation"/>
    <property type="evidence" value="ECO:0007669"/>
    <property type="project" value="UniProtKB-UniRule"/>
</dbReference>
<dbReference type="CDD" id="cd01667">
    <property type="entry name" value="TGS_ThrRS"/>
    <property type="match status" value="1"/>
</dbReference>
<dbReference type="CDD" id="cd00860">
    <property type="entry name" value="ThrRS_anticodon"/>
    <property type="match status" value="1"/>
</dbReference>
<dbReference type="CDD" id="cd00771">
    <property type="entry name" value="ThrRS_core"/>
    <property type="match status" value="1"/>
</dbReference>
<dbReference type="FunFam" id="3.30.930.10:FF:000002">
    <property type="entry name" value="Threonine--tRNA ligase"/>
    <property type="match status" value="1"/>
</dbReference>
<dbReference type="FunFam" id="3.40.50.800:FF:000001">
    <property type="entry name" value="Threonine--tRNA ligase"/>
    <property type="match status" value="1"/>
</dbReference>
<dbReference type="FunFam" id="3.30.980.10:FF:000005">
    <property type="entry name" value="Threonyl-tRNA synthetase, mitochondrial"/>
    <property type="match status" value="1"/>
</dbReference>
<dbReference type="Gene3D" id="3.10.20.30">
    <property type="match status" value="1"/>
</dbReference>
<dbReference type="Gene3D" id="3.40.50.800">
    <property type="entry name" value="Anticodon-binding domain"/>
    <property type="match status" value="1"/>
</dbReference>
<dbReference type="Gene3D" id="3.30.930.10">
    <property type="entry name" value="Bira Bifunctional Protein, Domain 2"/>
    <property type="match status" value="1"/>
</dbReference>
<dbReference type="Gene3D" id="3.30.980.10">
    <property type="entry name" value="Threonyl-trna Synthetase, Chain A, domain 2"/>
    <property type="match status" value="1"/>
</dbReference>
<dbReference type="HAMAP" id="MF_00184">
    <property type="entry name" value="Thr_tRNA_synth"/>
    <property type="match status" value="1"/>
</dbReference>
<dbReference type="InterPro" id="IPR002314">
    <property type="entry name" value="aa-tRNA-synt_IIb"/>
</dbReference>
<dbReference type="InterPro" id="IPR006195">
    <property type="entry name" value="aa-tRNA-synth_II"/>
</dbReference>
<dbReference type="InterPro" id="IPR045864">
    <property type="entry name" value="aa-tRNA-synth_II/BPL/LPL"/>
</dbReference>
<dbReference type="InterPro" id="IPR004154">
    <property type="entry name" value="Anticodon-bd"/>
</dbReference>
<dbReference type="InterPro" id="IPR036621">
    <property type="entry name" value="Anticodon-bd_dom_sf"/>
</dbReference>
<dbReference type="InterPro" id="IPR012675">
    <property type="entry name" value="Beta-grasp_dom_sf"/>
</dbReference>
<dbReference type="InterPro" id="IPR004095">
    <property type="entry name" value="TGS"/>
</dbReference>
<dbReference type="InterPro" id="IPR012676">
    <property type="entry name" value="TGS-like"/>
</dbReference>
<dbReference type="InterPro" id="IPR002320">
    <property type="entry name" value="Thr-tRNA-ligase_IIa"/>
</dbReference>
<dbReference type="InterPro" id="IPR018163">
    <property type="entry name" value="Thr/Ala-tRNA-synth_IIc_edit"/>
</dbReference>
<dbReference type="InterPro" id="IPR047246">
    <property type="entry name" value="ThrRS_anticodon"/>
</dbReference>
<dbReference type="InterPro" id="IPR033728">
    <property type="entry name" value="ThrRS_core"/>
</dbReference>
<dbReference type="InterPro" id="IPR012947">
    <property type="entry name" value="tRNA_SAD"/>
</dbReference>
<dbReference type="NCBIfam" id="TIGR00418">
    <property type="entry name" value="thrS"/>
    <property type="match status" value="1"/>
</dbReference>
<dbReference type="PANTHER" id="PTHR11451:SF44">
    <property type="entry name" value="THREONINE--TRNA LIGASE, CHLOROPLASTIC_MITOCHONDRIAL 2"/>
    <property type="match status" value="1"/>
</dbReference>
<dbReference type="PANTHER" id="PTHR11451">
    <property type="entry name" value="THREONINE-TRNA LIGASE"/>
    <property type="match status" value="1"/>
</dbReference>
<dbReference type="Pfam" id="PF03129">
    <property type="entry name" value="HGTP_anticodon"/>
    <property type="match status" value="1"/>
</dbReference>
<dbReference type="Pfam" id="PF02824">
    <property type="entry name" value="TGS"/>
    <property type="match status" value="1"/>
</dbReference>
<dbReference type="Pfam" id="PF00587">
    <property type="entry name" value="tRNA-synt_2b"/>
    <property type="match status" value="1"/>
</dbReference>
<dbReference type="Pfam" id="PF07973">
    <property type="entry name" value="tRNA_SAD"/>
    <property type="match status" value="1"/>
</dbReference>
<dbReference type="PRINTS" id="PR01047">
    <property type="entry name" value="TRNASYNTHTHR"/>
</dbReference>
<dbReference type="SMART" id="SM00863">
    <property type="entry name" value="tRNA_SAD"/>
    <property type="match status" value="1"/>
</dbReference>
<dbReference type="SUPFAM" id="SSF52954">
    <property type="entry name" value="Class II aaRS ABD-related"/>
    <property type="match status" value="1"/>
</dbReference>
<dbReference type="SUPFAM" id="SSF55681">
    <property type="entry name" value="Class II aaRS and biotin synthetases"/>
    <property type="match status" value="1"/>
</dbReference>
<dbReference type="SUPFAM" id="SSF81271">
    <property type="entry name" value="TGS-like"/>
    <property type="match status" value="1"/>
</dbReference>
<dbReference type="SUPFAM" id="SSF55186">
    <property type="entry name" value="ThrRS/AlaRS common domain"/>
    <property type="match status" value="1"/>
</dbReference>
<dbReference type="PROSITE" id="PS50862">
    <property type="entry name" value="AA_TRNA_LIGASE_II"/>
    <property type="match status" value="1"/>
</dbReference>
<dbReference type="PROSITE" id="PS51880">
    <property type="entry name" value="TGS"/>
    <property type="match status" value="1"/>
</dbReference>